<name>CPR1_ARATH</name>
<organism>
    <name type="scientific">Arabidopsis thaliana</name>
    <name type="common">Mouse-ear cress</name>
    <dbReference type="NCBI Taxonomy" id="3702"/>
    <lineage>
        <taxon>Eukaryota</taxon>
        <taxon>Viridiplantae</taxon>
        <taxon>Streptophyta</taxon>
        <taxon>Embryophyta</taxon>
        <taxon>Tracheophyta</taxon>
        <taxon>Spermatophyta</taxon>
        <taxon>Magnoliopsida</taxon>
        <taxon>eudicotyledons</taxon>
        <taxon>Gunneridae</taxon>
        <taxon>Pentapetalae</taxon>
        <taxon>rosids</taxon>
        <taxon>malvids</taxon>
        <taxon>Brassicales</taxon>
        <taxon>Brassicaceae</taxon>
        <taxon>Camelineae</taxon>
        <taxon>Arabidopsis</taxon>
    </lineage>
</organism>
<reference key="1">
    <citation type="journal article" date="1999" name="Nature">
        <title>Sequence and analysis of chromosome 4 of the plant Arabidopsis thaliana.</title>
        <authorList>
            <person name="Mayer K.F.X."/>
            <person name="Schueller C."/>
            <person name="Wambutt R."/>
            <person name="Murphy G."/>
            <person name="Volckaert G."/>
            <person name="Pohl T."/>
            <person name="Duesterhoeft A."/>
            <person name="Stiekema W."/>
            <person name="Entian K.-D."/>
            <person name="Terryn N."/>
            <person name="Harris B."/>
            <person name="Ansorge W."/>
            <person name="Brandt P."/>
            <person name="Grivell L.A."/>
            <person name="Rieger M."/>
            <person name="Weichselgartner M."/>
            <person name="de Simone V."/>
            <person name="Obermaier B."/>
            <person name="Mache R."/>
            <person name="Mueller M."/>
            <person name="Kreis M."/>
            <person name="Delseny M."/>
            <person name="Puigdomenech P."/>
            <person name="Watson M."/>
            <person name="Schmidtheini T."/>
            <person name="Reichert B."/>
            <person name="Portetelle D."/>
            <person name="Perez-Alonso M."/>
            <person name="Boutry M."/>
            <person name="Bancroft I."/>
            <person name="Vos P."/>
            <person name="Hoheisel J."/>
            <person name="Zimmermann W."/>
            <person name="Wedler H."/>
            <person name="Ridley P."/>
            <person name="Langham S.-A."/>
            <person name="McCullagh B."/>
            <person name="Bilham L."/>
            <person name="Robben J."/>
            <person name="van der Schueren J."/>
            <person name="Grymonprez B."/>
            <person name="Chuang Y.-J."/>
            <person name="Vandenbussche F."/>
            <person name="Braeken M."/>
            <person name="Weltjens I."/>
            <person name="Voet M."/>
            <person name="Bastiaens I."/>
            <person name="Aert R."/>
            <person name="Defoor E."/>
            <person name="Weitzenegger T."/>
            <person name="Bothe G."/>
            <person name="Ramsperger U."/>
            <person name="Hilbert H."/>
            <person name="Braun M."/>
            <person name="Holzer E."/>
            <person name="Brandt A."/>
            <person name="Peters S."/>
            <person name="van Staveren M."/>
            <person name="Dirkse W."/>
            <person name="Mooijman P."/>
            <person name="Klein Lankhorst R."/>
            <person name="Rose M."/>
            <person name="Hauf J."/>
            <person name="Koetter P."/>
            <person name="Berneiser S."/>
            <person name="Hempel S."/>
            <person name="Feldpausch M."/>
            <person name="Lamberth S."/>
            <person name="Van den Daele H."/>
            <person name="De Keyser A."/>
            <person name="Buysshaert C."/>
            <person name="Gielen J."/>
            <person name="Villarroel R."/>
            <person name="De Clercq R."/>
            <person name="van Montagu M."/>
            <person name="Rogers J."/>
            <person name="Cronin A."/>
            <person name="Quail M.A."/>
            <person name="Bray-Allen S."/>
            <person name="Clark L."/>
            <person name="Doggett J."/>
            <person name="Hall S."/>
            <person name="Kay M."/>
            <person name="Lennard N."/>
            <person name="McLay K."/>
            <person name="Mayes R."/>
            <person name="Pettett A."/>
            <person name="Rajandream M.A."/>
            <person name="Lyne M."/>
            <person name="Benes V."/>
            <person name="Rechmann S."/>
            <person name="Borkova D."/>
            <person name="Bloecker H."/>
            <person name="Scharfe M."/>
            <person name="Grimm M."/>
            <person name="Loehnert T.-H."/>
            <person name="Dose S."/>
            <person name="de Haan M."/>
            <person name="Maarse A.C."/>
            <person name="Schaefer M."/>
            <person name="Mueller-Auer S."/>
            <person name="Gabel C."/>
            <person name="Fuchs M."/>
            <person name="Fartmann B."/>
            <person name="Granderath K."/>
            <person name="Dauner D."/>
            <person name="Herzl A."/>
            <person name="Neumann S."/>
            <person name="Argiriou A."/>
            <person name="Vitale D."/>
            <person name="Liguori R."/>
            <person name="Piravandi E."/>
            <person name="Massenet O."/>
            <person name="Quigley F."/>
            <person name="Clabauld G."/>
            <person name="Muendlein A."/>
            <person name="Felber R."/>
            <person name="Schnabl S."/>
            <person name="Hiller R."/>
            <person name="Schmidt W."/>
            <person name="Lecharny A."/>
            <person name="Aubourg S."/>
            <person name="Chefdor F."/>
            <person name="Cooke R."/>
            <person name="Berger C."/>
            <person name="Monfort A."/>
            <person name="Casacuberta E."/>
            <person name="Gibbons T."/>
            <person name="Weber N."/>
            <person name="Vandenbol M."/>
            <person name="Bargues M."/>
            <person name="Terol J."/>
            <person name="Torres A."/>
            <person name="Perez-Perez A."/>
            <person name="Purnelle B."/>
            <person name="Bent E."/>
            <person name="Johnson S."/>
            <person name="Tacon D."/>
            <person name="Jesse T."/>
            <person name="Heijnen L."/>
            <person name="Schwarz S."/>
            <person name="Scholler P."/>
            <person name="Heber S."/>
            <person name="Francs P."/>
            <person name="Bielke C."/>
            <person name="Frishman D."/>
            <person name="Haase D."/>
            <person name="Lemcke K."/>
            <person name="Mewes H.-W."/>
            <person name="Stocker S."/>
            <person name="Zaccaria P."/>
            <person name="Bevan M."/>
            <person name="Wilson R.K."/>
            <person name="de la Bastide M."/>
            <person name="Habermann K."/>
            <person name="Parnell L."/>
            <person name="Dedhia N."/>
            <person name="Gnoj L."/>
            <person name="Schutz K."/>
            <person name="Huang E."/>
            <person name="Spiegel L."/>
            <person name="Sekhon M."/>
            <person name="Murray J."/>
            <person name="Sheet P."/>
            <person name="Cordes M."/>
            <person name="Abu-Threideh J."/>
            <person name="Stoneking T."/>
            <person name="Kalicki J."/>
            <person name="Graves T."/>
            <person name="Harmon G."/>
            <person name="Edwards J."/>
            <person name="Latreille P."/>
            <person name="Courtney L."/>
            <person name="Cloud J."/>
            <person name="Abbott A."/>
            <person name="Scott K."/>
            <person name="Johnson D."/>
            <person name="Minx P."/>
            <person name="Bentley D."/>
            <person name="Fulton B."/>
            <person name="Miller N."/>
            <person name="Greco T."/>
            <person name="Kemp K."/>
            <person name="Kramer J."/>
            <person name="Fulton L."/>
            <person name="Mardis E."/>
            <person name="Dante M."/>
            <person name="Pepin K."/>
            <person name="Hillier L.W."/>
            <person name="Nelson J."/>
            <person name="Spieth J."/>
            <person name="Ryan E."/>
            <person name="Andrews S."/>
            <person name="Geisel C."/>
            <person name="Layman D."/>
            <person name="Du H."/>
            <person name="Ali J."/>
            <person name="Berghoff A."/>
            <person name="Jones K."/>
            <person name="Drone K."/>
            <person name="Cotton M."/>
            <person name="Joshu C."/>
            <person name="Antonoiu B."/>
            <person name="Zidanic M."/>
            <person name="Strong C."/>
            <person name="Sun H."/>
            <person name="Lamar B."/>
            <person name="Yordan C."/>
            <person name="Ma P."/>
            <person name="Zhong J."/>
            <person name="Preston R."/>
            <person name="Vil D."/>
            <person name="Shekher M."/>
            <person name="Matero A."/>
            <person name="Shah R."/>
            <person name="Swaby I.K."/>
            <person name="O'Shaughnessy A."/>
            <person name="Rodriguez M."/>
            <person name="Hoffman J."/>
            <person name="Till S."/>
            <person name="Granat S."/>
            <person name="Shohdy N."/>
            <person name="Hasegawa A."/>
            <person name="Hameed A."/>
            <person name="Lodhi M."/>
            <person name="Johnson A."/>
            <person name="Chen E."/>
            <person name="Marra M.A."/>
            <person name="Martienssen R."/>
            <person name="McCombie W.R."/>
        </authorList>
    </citation>
    <scope>NUCLEOTIDE SEQUENCE [LARGE SCALE GENOMIC DNA]</scope>
    <source>
        <strain>cv. Columbia</strain>
    </source>
</reference>
<reference key="2">
    <citation type="journal article" date="2017" name="Plant J.">
        <title>Araport11: a complete reannotation of the Arabidopsis thaliana reference genome.</title>
        <authorList>
            <person name="Cheng C.Y."/>
            <person name="Krishnakumar V."/>
            <person name="Chan A.P."/>
            <person name="Thibaud-Nissen F."/>
            <person name="Schobel S."/>
            <person name="Town C.D."/>
        </authorList>
    </citation>
    <scope>GENOME REANNOTATION</scope>
    <source>
        <strain>cv. Columbia</strain>
    </source>
</reference>
<reference key="3">
    <citation type="submission" date="2006-07" db="EMBL/GenBank/DDBJ databases">
        <title>Large-scale analysis of RIKEN Arabidopsis full-length (RAFL) cDNAs.</title>
        <authorList>
            <person name="Totoki Y."/>
            <person name="Seki M."/>
            <person name="Ishida J."/>
            <person name="Nakajima M."/>
            <person name="Enju A."/>
            <person name="Kamiya A."/>
            <person name="Narusaka M."/>
            <person name="Shin-i T."/>
            <person name="Nakagawa M."/>
            <person name="Sakamoto N."/>
            <person name="Oishi K."/>
            <person name="Kohara Y."/>
            <person name="Kobayashi M."/>
            <person name="Toyoda A."/>
            <person name="Sakaki Y."/>
            <person name="Sakurai T."/>
            <person name="Iida K."/>
            <person name="Akiyama K."/>
            <person name="Satou M."/>
            <person name="Toyoda T."/>
            <person name="Konagaya A."/>
            <person name="Carninci P."/>
            <person name="Kawai J."/>
            <person name="Hayashizaki Y."/>
            <person name="Shinozaki K."/>
        </authorList>
    </citation>
    <scope>NUCLEOTIDE SEQUENCE [LARGE SCALE MRNA]</scope>
    <source>
        <strain>cv. Columbia</strain>
    </source>
</reference>
<reference key="4">
    <citation type="journal article" date="2009" name="Plant J.">
        <title>An F-box gene, CPR30, functions as a negative regulator of the defense response in Arabidopsis.</title>
        <authorList>
            <person name="Gou M."/>
            <person name="Su N."/>
            <person name="Zheng J."/>
            <person name="Huai J."/>
            <person name="Wu G."/>
            <person name="Zhao J."/>
            <person name="He J."/>
            <person name="Tang D."/>
            <person name="Yang S."/>
            <person name="Wang G."/>
        </authorList>
    </citation>
    <scope>FUNCTION</scope>
    <scope>DISRUPTION PHENOTYPE</scope>
    <scope>TISSUE SPECIFICITY</scope>
    <scope>SUBCELLULAR LOCATION</scope>
    <scope>INTERACTION WITH SKP1A/ASK1; SPK1B/ASK2; ASK9; ASK10; ASK11; ASK13; ASK14; ASK16; ASK17; ASK18 AND ASK19</scope>
</reference>
<reference key="5">
    <citation type="journal article" date="2016" name="Cell Host Microbe">
        <title>Plant TRAF proteins regulate NLR immune receptor turnover.</title>
        <authorList>
            <person name="Huang S."/>
            <person name="Chen X."/>
            <person name="Zhong X."/>
            <person name="Li M."/>
            <person name="Ao K."/>
            <person name="Huang J."/>
            <person name="Li X."/>
        </authorList>
    </citation>
    <scope>INTERACTION WITH TRAF1B</scope>
</reference>
<feature type="chain" id="PRO_0000283502" description="F-box protein CPR1">
    <location>
        <begin position="1"/>
        <end position="413"/>
    </location>
</feature>
<feature type="domain" description="F-box" evidence="2">
    <location>
        <begin position="1"/>
        <end position="48"/>
    </location>
</feature>
<feature type="sequence conflict" description="In Ref. 3; BAF01202." evidence="6" ref="3">
    <original>D</original>
    <variation>G</variation>
    <location>
        <position position="402"/>
    </location>
</feature>
<dbReference type="EMBL" id="AL049730">
    <property type="protein sequence ID" value="CAB41726.1"/>
    <property type="status" value="ALT_SEQ"/>
    <property type="molecule type" value="Genomic_DNA"/>
</dbReference>
<dbReference type="EMBL" id="AL161534">
    <property type="protein sequence ID" value="CAB78299.1"/>
    <property type="status" value="ALT_SEQ"/>
    <property type="molecule type" value="Genomic_DNA"/>
</dbReference>
<dbReference type="EMBL" id="CP002687">
    <property type="protein sequence ID" value="AEE83147.1"/>
    <property type="molecule type" value="Genomic_DNA"/>
</dbReference>
<dbReference type="EMBL" id="CP002687">
    <property type="protein sequence ID" value="AEE83148.1"/>
    <property type="molecule type" value="Genomic_DNA"/>
</dbReference>
<dbReference type="EMBL" id="CP002687">
    <property type="protein sequence ID" value="ANM66283.1"/>
    <property type="molecule type" value="Genomic_DNA"/>
</dbReference>
<dbReference type="EMBL" id="AK229339">
    <property type="protein sequence ID" value="BAF01202.1"/>
    <property type="molecule type" value="mRNA"/>
</dbReference>
<dbReference type="PIR" id="T07648">
    <property type="entry name" value="T07648"/>
</dbReference>
<dbReference type="RefSeq" id="NP_001078377.1">
    <property type="nucleotide sequence ID" value="NM_001084908.2"/>
</dbReference>
<dbReference type="RefSeq" id="NP_001328191.1">
    <property type="nucleotide sequence ID" value="NM_001340790.1"/>
</dbReference>
<dbReference type="RefSeq" id="NP_192993.2">
    <property type="nucleotide sequence ID" value="NM_117326.4"/>
</dbReference>
<dbReference type="BioGRID" id="12167">
    <property type="interactions" value="16"/>
</dbReference>
<dbReference type="DIP" id="DIP-59704N"/>
<dbReference type="FunCoup" id="Q9SU30">
    <property type="interactions" value="1383"/>
</dbReference>
<dbReference type="IntAct" id="Q9SU30">
    <property type="interactions" value="2"/>
</dbReference>
<dbReference type="STRING" id="3702.Q9SU30"/>
<dbReference type="PaxDb" id="3702-AT4G12560.2"/>
<dbReference type="ProteomicsDB" id="224542"/>
<dbReference type="EnsemblPlants" id="AT4G12560.1">
    <property type="protein sequence ID" value="AT4G12560.1"/>
    <property type="gene ID" value="AT4G12560"/>
</dbReference>
<dbReference type="EnsemblPlants" id="AT4G12560.2">
    <property type="protein sequence ID" value="AT4G12560.2"/>
    <property type="gene ID" value="AT4G12560"/>
</dbReference>
<dbReference type="EnsemblPlants" id="AT4G12560.3">
    <property type="protein sequence ID" value="AT4G12560.3"/>
    <property type="gene ID" value="AT4G12560"/>
</dbReference>
<dbReference type="GeneID" id="826869"/>
<dbReference type="Gramene" id="AT4G12560.1">
    <property type="protein sequence ID" value="AT4G12560.1"/>
    <property type="gene ID" value="AT4G12560"/>
</dbReference>
<dbReference type="Gramene" id="AT4G12560.2">
    <property type="protein sequence ID" value="AT4G12560.2"/>
    <property type="gene ID" value="AT4G12560"/>
</dbReference>
<dbReference type="Gramene" id="AT4G12560.3">
    <property type="protein sequence ID" value="AT4G12560.3"/>
    <property type="gene ID" value="AT4G12560"/>
</dbReference>
<dbReference type="KEGG" id="ath:AT4G12560"/>
<dbReference type="Araport" id="AT4G12560"/>
<dbReference type="TAIR" id="AT4G12560">
    <property type="gene designation" value="CPR1"/>
</dbReference>
<dbReference type="eggNOG" id="ENOG502QVMN">
    <property type="taxonomic scope" value="Eukaryota"/>
</dbReference>
<dbReference type="HOGENOM" id="CLU_027176_1_2_1"/>
<dbReference type="InParanoid" id="Q9SU30"/>
<dbReference type="OMA" id="TKLVWFD"/>
<dbReference type="PhylomeDB" id="Q9SU30"/>
<dbReference type="UniPathway" id="UPA00143"/>
<dbReference type="PRO" id="PR:Q9SU30"/>
<dbReference type="Proteomes" id="UP000006548">
    <property type="component" value="Chromosome 4"/>
</dbReference>
<dbReference type="ExpressionAtlas" id="Q9SU30">
    <property type="expression patterns" value="baseline and differential"/>
</dbReference>
<dbReference type="GO" id="GO:0005737">
    <property type="term" value="C:cytoplasm"/>
    <property type="evidence" value="ECO:0000314"/>
    <property type="project" value="TAIR"/>
</dbReference>
<dbReference type="GO" id="GO:0005634">
    <property type="term" value="C:nucleus"/>
    <property type="evidence" value="ECO:0000314"/>
    <property type="project" value="TAIR"/>
</dbReference>
<dbReference type="GO" id="GO:0031348">
    <property type="term" value="P:negative regulation of defense response"/>
    <property type="evidence" value="ECO:0000315"/>
    <property type="project" value="TAIR"/>
</dbReference>
<dbReference type="GO" id="GO:0042177">
    <property type="term" value="P:negative regulation of protein catabolic process"/>
    <property type="evidence" value="ECO:0000315"/>
    <property type="project" value="TAIR"/>
</dbReference>
<dbReference type="GO" id="GO:0009626">
    <property type="term" value="P:plant-type hypersensitive response"/>
    <property type="evidence" value="ECO:0007669"/>
    <property type="project" value="UniProtKB-KW"/>
</dbReference>
<dbReference type="GO" id="GO:0016567">
    <property type="term" value="P:protein ubiquitination"/>
    <property type="evidence" value="ECO:0007669"/>
    <property type="project" value="UniProtKB-UniPathway"/>
</dbReference>
<dbReference type="InterPro" id="IPR006527">
    <property type="entry name" value="F-box-assoc_dom_typ1"/>
</dbReference>
<dbReference type="InterPro" id="IPR017451">
    <property type="entry name" value="F-box-assoc_interact_dom"/>
</dbReference>
<dbReference type="InterPro" id="IPR036047">
    <property type="entry name" value="F-box-like_dom_sf"/>
</dbReference>
<dbReference type="InterPro" id="IPR001810">
    <property type="entry name" value="F-box_dom"/>
</dbReference>
<dbReference type="InterPro" id="IPR050796">
    <property type="entry name" value="SCF_F-box_component"/>
</dbReference>
<dbReference type="NCBIfam" id="TIGR01640">
    <property type="entry name" value="F_box_assoc_1"/>
    <property type="match status" value="1"/>
</dbReference>
<dbReference type="PANTHER" id="PTHR31672">
    <property type="entry name" value="BNACNNG10540D PROTEIN"/>
    <property type="match status" value="1"/>
</dbReference>
<dbReference type="PANTHER" id="PTHR31672:SF13">
    <property type="entry name" value="F-BOX PROTEIN CPR30-LIKE"/>
    <property type="match status" value="1"/>
</dbReference>
<dbReference type="Pfam" id="PF00646">
    <property type="entry name" value="F-box"/>
    <property type="match status" value="1"/>
</dbReference>
<dbReference type="Pfam" id="PF07734">
    <property type="entry name" value="FBA_1"/>
    <property type="match status" value="1"/>
</dbReference>
<dbReference type="SMART" id="SM00256">
    <property type="entry name" value="FBOX"/>
    <property type="match status" value="1"/>
</dbReference>
<dbReference type="SUPFAM" id="SSF81383">
    <property type="entry name" value="F-box domain"/>
    <property type="match status" value="1"/>
</dbReference>
<dbReference type="PROSITE" id="PS50181">
    <property type="entry name" value="FBOX"/>
    <property type="match status" value="1"/>
</dbReference>
<comment type="function">
    <text evidence="1 3">Component of SCF(ASK-cullin-F-box) E3 ubiquitin ligase complexes, which may mediate the ubiquitination and subsequent proteasomal degradation of target proteins (By similarity). Regulates negatively both salicylic acid (SA)-dependent and SA-independent defense signaling.</text>
</comment>
<comment type="pathway">
    <text>Protein modification; protein ubiquitination.</text>
</comment>
<comment type="subunit">
    <text evidence="1 3 4">Part of a SCF (ASK-cullin-F-box) protein ligase complex (By similarity). Interacts with SKP1A/ASK1, SPK1B/ASK2, ASK9, ASK10, ASK11, ASK13, ASK14, ASK16, ASK17, ASK18 and ASK19. Interacts with TRAF1B (PubMed:26867179).</text>
</comment>
<comment type="interaction">
    <interactant intactId="EBI-15941797">
        <id>Q9SU30</id>
    </interactant>
    <interactant intactId="EBI-15866586">
        <id>O23530</id>
        <label>SNC1</label>
    </interactant>
    <organismsDiffer>false</organismsDiffer>
    <experiments>2</experiments>
</comment>
<comment type="subcellular location">
    <subcellularLocation>
        <location evidence="3">Cytoplasm</location>
    </subcellularLocation>
    <subcellularLocation>
        <location evidence="3">Nucleus</location>
    </subcellularLocation>
</comment>
<comment type="tissue specificity">
    <text evidence="3">Expressed in seedling, root, stem, leaves, inflorescence and silique, especially in veins and trichomes.</text>
</comment>
<comment type="domain">
    <text evidence="1">The F-box is necessary for the interaction with ASK proteins.</text>
</comment>
<comment type="disruption phenotype">
    <text evidence="3">Temperature dependent; normal at high temperature (above 28 degrees Celsius), but in colder temperature, dwarf morphology, constitutive resistance to the bacterial pathogen Pseudomonas syringae, and induction of defense-response gene expression such as PR-30.</text>
</comment>
<comment type="sequence caution" evidence="6">
    <conflict type="erroneous gene model prediction">
        <sequence resource="EMBL-CDS" id="CAB41726"/>
    </conflict>
</comment>
<comment type="sequence caution" evidence="6">
    <conflict type="erroneous gene model prediction">
        <sequence resource="EMBL-CDS" id="CAB78299"/>
    </conflict>
</comment>
<proteinExistence type="evidence at protein level"/>
<gene>
    <name type="primary">CPR1</name>
    <name evidence="5" type="synonym">CPR30</name>
    <name type="ordered locus">At4g12560</name>
    <name type="ORF">T1P17.150</name>
</gene>
<accession>Q9SU30</accession>
<accession>Q0WNU7</accession>
<evidence type="ECO:0000250" key="1"/>
<evidence type="ECO:0000255" key="2">
    <source>
        <dbReference type="PROSITE-ProRule" id="PRU00080"/>
    </source>
</evidence>
<evidence type="ECO:0000269" key="3">
    <source>
    </source>
</evidence>
<evidence type="ECO:0000269" key="4">
    <source>
    </source>
</evidence>
<evidence type="ECO:0000303" key="5">
    <source>
    </source>
</evidence>
<evidence type="ECO:0000305" key="6"/>
<protein>
    <recommendedName>
        <fullName>F-box protein CPR1</fullName>
    </recommendedName>
    <alternativeName>
        <fullName>Protein CONSTITUTIVE EXPRESSER OF PR GENES 1</fullName>
    </alternativeName>
    <alternativeName>
        <fullName evidence="5">Protein CONSTITUTIVE EXPRESSER OF PR GENES 30</fullName>
    </alternativeName>
</protein>
<keyword id="KW-0963">Cytoplasm</keyword>
<keyword id="KW-0381">Hypersensitive response</keyword>
<keyword id="KW-0539">Nucleus</keyword>
<keyword id="KW-0611">Plant defense</keyword>
<keyword id="KW-1185">Reference proteome</keyword>
<keyword id="KW-0833">Ubl conjugation pathway</keyword>
<sequence length="413" mass="47259">MATIPMDIVNDIFLRLPAKTLVRCRALSKPCYHLINDPDFIESHLHRVLQTGDHLMILLRGALRLYSVDLDSLDSVSDVEHPMKRGGPTEVFGSSNGLIGLSNSPTDLAVFNPSTRQIHRLPPSSIDLPDGSSTRGYVFYGLGYDSVSDDYKVVRMVQFKIDSEDELGCSFPYEVKVFSLKKNSWKRIESVASSIQLLFYFYYHLLYRRGYGVLAGNSLHWVLPRRPGLIAFNLIVRFDLALEEFEIVRFPEAVANGNVDIQMDIGVLDGCLCLMCNYDQSYVDVWMMKEYNVRDSWTKVFTVQKPKSVKSFSYMRPLVYSKDKKKVLLELNNTKLVWFDLESKKMSTLRIKDCPSSYSAELVVSSLVLGCKGDLNNIKYRKEQQAKEAREAKIMQNTKRRDDFLSKGFKLVL</sequence>